<evidence type="ECO:0000255" key="1">
    <source>
        <dbReference type="HAMAP-Rule" id="MF_01306"/>
    </source>
</evidence>
<evidence type="ECO:0000256" key="2">
    <source>
        <dbReference type="SAM" id="MobiDB-lite"/>
    </source>
</evidence>
<evidence type="ECO:0000305" key="3"/>
<proteinExistence type="inferred from homology"/>
<sequence length="200" mass="23034">MARYTGPTWKISRRLGISLSGTGKELQKRPYAPGQHGPNQRKKLSEYGLQLQEKQKLRHMYGVNERQFRRIFNDAGKMAGIHGENFMILLESRLDNLVYRMGLARTRRAARQLVNHGHITVDGQRVDIPSYRVKPGQVIGVREKSRNLQVIKESLESNDFVPAYVTFDADKLEGTYSRFPERSELPAEITEALIVEFYSR</sequence>
<gene>
    <name evidence="1" type="primary">rpsD</name>
    <name type="ordered locus">BH3209</name>
</gene>
<reference key="1">
    <citation type="journal article" date="2000" name="Nucleic Acids Res.">
        <title>Complete genome sequence of the alkaliphilic bacterium Bacillus halodurans and genomic sequence comparison with Bacillus subtilis.</title>
        <authorList>
            <person name="Takami H."/>
            <person name="Nakasone K."/>
            <person name="Takaki Y."/>
            <person name="Maeno G."/>
            <person name="Sasaki R."/>
            <person name="Masui N."/>
            <person name="Fuji F."/>
            <person name="Hirama C."/>
            <person name="Nakamura Y."/>
            <person name="Ogasawara N."/>
            <person name="Kuhara S."/>
            <person name="Horikoshi K."/>
        </authorList>
    </citation>
    <scope>NUCLEOTIDE SEQUENCE [LARGE SCALE GENOMIC DNA]</scope>
    <source>
        <strain>ATCC BAA-125 / DSM 18197 / FERM 7344 / JCM 9153 / C-125</strain>
    </source>
</reference>
<accession>Q9K7Z8</accession>
<dbReference type="EMBL" id="BA000004">
    <property type="protein sequence ID" value="BAB06928.1"/>
    <property type="molecule type" value="Genomic_DNA"/>
</dbReference>
<dbReference type="PIR" id="A84051">
    <property type="entry name" value="A84051"/>
</dbReference>
<dbReference type="RefSeq" id="WP_010899352.1">
    <property type="nucleotide sequence ID" value="NC_002570.2"/>
</dbReference>
<dbReference type="SMR" id="Q9K7Z8"/>
<dbReference type="STRING" id="272558.gene:10729121"/>
<dbReference type="GeneID" id="87598728"/>
<dbReference type="KEGG" id="bha:BH3209"/>
<dbReference type="eggNOG" id="COG0522">
    <property type="taxonomic scope" value="Bacteria"/>
</dbReference>
<dbReference type="HOGENOM" id="CLU_092403_0_1_9"/>
<dbReference type="OrthoDB" id="9803672at2"/>
<dbReference type="Proteomes" id="UP000001258">
    <property type="component" value="Chromosome"/>
</dbReference>
<dbReference type="GO" id="GO:0015935">
    <property type="term" value="C:small ribosomal subunit"/>
    <property type="evidence" value="ECO:0007669"/>
    <property type="project" value="InterPro"/>
</dbReference>
<dbReference type="GO" id="GO:0019843">
    <property type="term" value="F:rRNA binding"/>
    <property type="evidence" value="ECO:0007669"/>
    <property type="project" value="UniProtKB-UniRule"/>
</dbReference>
<dbReference type="GO" id="GO:0003735">
    <property type="term" value="F:structural constituent of ribosome"/>
    <property type="evidence" value="ECO:0007669"/>
    <property type="project" value="InterPro"/>
</dbReference>
<dbReference type="GO" id="GO:0042274">
    <property type="term" value="P:ribosomal small subunit biogenesis"/>
    <property type="evidence" value="ECO:0007669"/>
    <property type="project" value="TreeGrafter"/>
</dbReference>
<dbReference type="GO" id="GO:0006412">
    <property type="term" value="P:translation"/>
    <property type="evidence" value="ECO:0007669"/>
    <property type="project" value="UniProtKB-UniRule"/>
</dbReference>
<dbReference type="CDD" id="cd00165">
    <property type="entry name" value="S4"/>
    <property type="match status" value="1"/>
</dbReference>
<dbReference type="FunFam" id="1.10.1050.10:FF:000001">
    <property type="entry name" value="30S ribosomal protein S4"/>
    <property type="match status" value="1"/>
</dbReference>
<dbReference type="FunFam" id="3.10.290.10:FF:000001">
    <property type="entry name" value="30S ribosomal protein S4"/>
    <property type="match status" value="1"/>
</dbReference>
<dbReference type="Gene3D" id="1.10.1050.10">
    <property type="entry name" value="Ribosomal Protein S4 Delta 41, Chain A, domain 1"/>
    <property type="match status" value="1"/>
</dbReference>
<dbReference type="Gene3D" id="3.10.290.10">
    <property type="entry name" value="RNA-binding S4 domain"/>
    <property type="match status" value="1"/>
</dbReference>
<dbReference type="HAMAP" id="MF_01306_B">
    <property type="entry name" value="Ribosomal_uS4_B"/>
    <property type="match status" value="1"/>
</dbReference>
<dbReference type="InterPro" id="IPR022801">
    <property type="entry name" value="Ribosomal_uS4"/>
</dbReference>
<dbReference type="InterPro" id="IPR005709">
    <property type="entry name" value="Ribosomal_uS4_bac-type"/>
</dbReference>
<dbReference type="InterPro" id="IPR018079">
    <property type="entry name" value="Ribosomal_uS4_CS"/>
</dbReference>
<dbReference type="InterPro" id="IPR001912">
    <property type="entry name" value="Ribosomal_uS4_N"/>
</dbReference>
<dbReference type="InterPro" id="IPR002942">
    <property type="entry name" value="S4_RNA-bd"/>
</dbReference>
<dbReference type="InterPro" id="IPR036986">
    <property type="entry name" value="S4_RNA-bd_sf"/>
</dbReference>
<dbReference type="NCBIfam" id="NF003717">
    <property type="entry name" value="PRK05327.1"/>
    <property type="match status" value="1"/>
</dbReference>
<dbReference type="NCBIfam" id="TIGR01017">
    <property type="entry name" value="rpsD_bact"/>
    <property type="match status" value="1"/>
</dbReference>
<dbReference type="PANTHER" id="PTHR11831">
    <property type="entry name" value="30S 40S RIBOSOMAL PROTEIN"/>
    <property type="match status" value="1"/>
</dbReference>
<dbReference type="PANTHER" id="PTHR11831:SF4">
    <property type="entry name" value="SMALL RIBOSOMAL SUBUNIT PROTEIN US4M"/>
    <property type="match status" value="1"/>
</dbReference>
<dbReference type="Pfam" id="PF00163">
    <property type="entry name" value="Ribosomal_S4"/>
    <property type="match status" value="1"/>
</dbReference>
<dbReference type="Pfam" id="PF01479">
    <property type="entry name" value="S4"/>
    <property type="match status" value="1"/>
</dbReference>
<dbReference type="SMART" id="SM01390">
    <property type="entry name" value="Ribosomal_S4"/>
    <property type="match status" value="1"/>
</dbReference>
<dbReference type="SMART" id="SM00363">
    <property type="entry name" value="S4"/>
    <property type="match status" value="1"/>
</dbReference>
<dbReference type="SUPFAM" id="SSF55174">
    <property type="entry name" value="Alpha-L RNA-binding motif"/>
    <property type="match status" value="1"/>
</dbReference>
<dbReference type="PROSITE" id="PS00632">
    <property type="entry name" value="RIBOSOMAL_S4"/>
    <property type="match status" value="1"/>
</dbReference>
<dbReference type="PROSITE" id="PS50889">
    <property type="entry name" value="S4"/>
    <property type="match status" value="1"/>
</dbReference>
<comment type="function">
    <text evidence="1">One of the primary rRNA binding proteins, it binds directly to 16S rRNA where it nucleates assembly of the body of the 30S subunit.</text>
</comment>
<comment type="function">
    <text evidence="1">With S5 and S12 plays an important role in translational accuracy.</text>
</comment>
<comment type="subunit">
    <text evidence="1">Part of the 30S ribosomal subunit. Contacts protein S5. The interaction surface between S4 and S5 is involved in control of translational fidelity.</text>
</comment>
<comment type="similarity">
    <text evidence="1">Belongs to the universal ribosomal protein uS4 family.</text>
</comment>
<keyword id="KW-1185">Reference proteome</keyword>
<keyword id="KW-0687">Ribonucleoprotein</keyword>
<keyword id="KW-0689">Ribosomal protein</keyword>
<keyword id="KW-0694">RNA-binding</keyword>
<keyword id="KW-0699">rRNA-binding</keyword>
<protein>
    <recommendedName>
        <fullName evidence="1">Small ribosomal subunit protein uS4</fullName>
    </recommendedName>
    <alternativeName>
        <fullName evidence="3">30S ribosomal protein S4</fullName>
    </alternativeName>
</protein>
<feature type="chain" id="PRO_0000132335" description="Small ribosomal subunit protein uS4">
    <location>
        <begin position="1"/>
        <end position="200"/>
    </location>
</feature>
<feature type="domain" description="S4 RNA-binding" evidence="1">
    <location>
        <begin position="92"/>
        <end position="152"/>
    </location>
</feature>
<feature type="region of interest" description="Disordered" evidence="2">
    <location>
        <begin position="22"/>
        <end position="41"/>
    </location>
</feature>
<name>RS4_HALH5</name>
<organism>
    <name type="scientific">Halalkalibacterium halodurans (strain ATCC BAA-125 / DSM 18197 / FERM 7344 / JCM 9153 / C-125)</name>
    <name type="common">Bacillus halodurans</name>
    <dbReference type="NCBI Taxonomy" id="272558"/>
    <lineage>
        <taxon>Bacteria</taxon>
        <taxon>Bacillati</taxon>
        <taxon>Bacillota</taxon>
        <taxon>Bacilli</taxon>
        <taxon>Bacillales</taxon>
        <taxon>Bacillaceae</taxon>
        <taxon>Halalkalibacterium (ex Joshi et al. 2022)</taxon>
    </lineage>
</organism>